<organism>
    <name type="scientific">Rickettsia bellii (strain RML369-C)</name>
    <dbReference type="NCBI Taxonomy" id="336407"/>
    <lineage>
        <taxon>Bacteria</taxon>
        <taxon>Pseudomonadati</taxon>
        <taxon>Pseudomonadota</taxon>
        <taxon>Alphaproteobacteria</taxon>
        <taxon>Rickettsiales</taxon>
        <taxon>Rickettsiaceae</taxon>
        <taxon>Rickettsieae</taxon>
        <taxon>Rickettsia</taxon>
        <taxon>belli group</taxon>
    </lineage>
</organism>
<reference key="1">
    <citation type="journal article" date="2006" name="PLoS Genet.">
        <title>Genome sequence of Rickettsia bellii illuminates the role of amoebae in gene exchanges between intracellular pathogens.</title>
        <authorList>
            <person name="Ogata H."/>
            <person name="La Scola B."/>
            <person name="Audic S."/>
            <person name="Renesto P."/>
            <person name="Blanc G."/>
            <person name="Robert C."/>
            <person name="Fournier P.-E."/>
            <person name="Claverie J.-M."/>
            <person name="Raoult D."/>
        </authorList>
    </citation>
    <scope>NUCLEOTIDE SEQUENCE [LARGE SCALE GENOMIC DNA]</scope>
    <source>
        <strain>RML369-C</strain>
    </source>
</reference>
<accession>Q1RJC7</accession>
<gene>
    <name evidence="1" type="primary">ubiG</name>
    <name type="ordered locus">RBE_0456</name>
</gene>
<feature type="chain" id="PRO_0000241731" description="Ubiquinone biosynthesis O-methyltransferase">
    <location>
        <begin position="1"/>
        <end position="240"/>
    </location>
</feature>
<feature type="binding site" evidence="1">
    <location>
        <position position="36"/>
    </location>
    <ligand>
        <name>S-adenosyl-L-methionine</name>
        <dbReference type="ChEBI" id="CHEBI:59789"/>
    </ligand>
</feature>
<feature type="binding site" evidence="1">
    <location>
        <position position="60"/>
    </location>
    <ligand>
        <name>S-adenosyl-L-methionine</name>
        <dbReference type="ChEBI" id="CHEBI:59789"/>
    </ligand>
</feature>
<feature type="binding site" evidence="1">
    <location>
        <position position="81"/>
    </location>
    <ligand>
        <name>S-adenosyl-L-methionine</name>
        <dbReference type="ChEBI" id="CHEBI:59789"/>
    </ligand>
</feature>
<feature type="binding site" evidence="1">
    <location>
        <position position="123"/>
    </location>
    <ligand>
        <name>S-adenosyl-L-methionine</name>
        <dbReference type="ChEBI" id="CHEBI:59789"/>
    </ligand>
</feature>
<name>UBIG_RICBR</name>
<evidence type="ECO:0000255" key="1">
    <source>
        <dbReference type="HAMAP-Rule" id="MF_00472"/>
    </source>
</evidence>
<protein>
    <recommendedName>
        <fullName evidence="1">Ubiquinone biosynthesis O-methyltransferase</fullName>
    </recommendedName>
    <alternativeName>
        <fullName evidence="1">2-polyprenyl-6-hydroxyphenol methylase</fullName>
        <ecNumber evidence="1">2.1.1.222</ecNumber>
    </alternativeName>
    <alternativeName>
        <fullName evidence="1">3-demethylubiquinone 3-O-methyltransferase</fullName>
        <ecNumber evidence="1">2.1.1.64</ecNumber>
    </alternativeName>
</protein>
<proteinExistence type="inferred from homology"/>
<sequence length="240" mass="27537">MSSVNKNELEKFEKISHSWWNKDGEFGILHRINPIRLNYIIEKIKSHYNDISDLEILDVGCGGGLIATNLTMQGFNVTAIDALQSNIDTALAYATENNIKVNYLKSTIEELENDKQYDVVICLEVIEHVENVQEFMLNLVKRIKPKGIAIISTINRTKKAYLLGIIAAEYILGWVPKNTHDYSKFLKPSEIYEMLENTNIEIEELKGLVYNMAEDKWVLSDDDIDVNYFVYLKKNVLGVI</sequence>
<keyword id="KW-0489">Methyltransferase</keyword>
<keyword id="KW-0949">S-adenosyl-L-methionine</keyword>
<keyword id="KW-0808">Transferase</keyword>
<keyword id="KW-0831">Ubiquinone biosynthesis</keyword>
<dbReference type="EC" id="2.1.1.222" evidence="1"/>
<dbReference type="EC" id="2.1.1.64" evidence="1"/>
<dbReference type="EMBL" id="CP000087">
    <property type="protein sequence ID" value="ABE04537.1"/>
    <property type="molecule type" value="Genomic_DNA"/>
</dbReference>
<dbReference type="RefSeq" id="WP_011477130.1">
    <property type="nucleotide sequence ID" value="NC_007940.1"/>
</dbReference>
<dbReference type="SMR" id="Q1RJC7"/>
<dbReference type="KEGG" id="rbe:RBE_0456"/>
<dbReference type="eggNOG" id="COG2227">
    <property type="taxonomic scope" value="Bacteria"/>
</dbReference>
<dbReference type="HOGENOM" id="CLU_042432_0_0_5"/>
<dbReference type="OrthoDB" id="9801538at2"/>
<dbReference type="UniPathway" id="UPA00232"/>
<dbReference type="Proteomes" id="UP000001951">
    <property type="component" value="Chromosome"/>
</dbReference>
<dbReference type="GO" id="GO:0102208">
    <property type="term" value="F:2-polyprenyl-6-hydroxyphenol methylase activity"/>
    <property type="evidence" value="ECO:0007669"/>
    <property type="project" value="UniProtKB-EC"/>
</dbReference>
<dbReference type="GO" id="GO:0061542">
    <property type="term" value="F:3-demethylubiquinol 3-O-methyltransferase activity"/>
    <property type="evidence" value="ECO:0007669"/>
    <property type="project" value="UniProtKB-UniRule"/>
</dbReference>
<dbReference type="GO" id="GO:0010420">
    <property type="term" value="F:polyprenyldihydroxybenzoate methyltransferase activity"/>
    <property type="evidence" value="ECO:0007669"/>
    <property type="project" value="InterPro"/>
</dbReference>
<dbReference type="GO" id="GO:0032259">
    <property type="term" value="P:methylation"/>
    <property type="evidence" value="ECO:0007669"/>
    <property type="project" value="UniProtKB-KW"/>
</dbReference>
<dbReference type="CDD" id="cd02440">
    <property type="entry name" value="AdoMet_MTases"/>
    <property type="match status" value="1"/>
</dbReference>
<dbReference type="Gene3D" id="3.40.50.150">
    <property type="entry name" value="Vaccinia Virus protein VP39"/>
    <property type="match status" value="1"/>
</dbReference>
<dbReference type="HAMAP" id="MF_00472">
    <property type="entry name" value="UbiG"/>
    <property type="match status" value="1"/>
</dbReference>
<dbReference type="InterPro" id="IPR029063">
    <property type="entry name" value="SAM-dependent_MTases_sf"/>
</dbReference>
<dbReference type="InterPro" id="IPR010233">
    <property type="entry name" value="UbiG_MeTrfase"/>
</dbReference>
<dbReference type="NCBIfam" id="TIGR01983">
    <property type="entry name" value="UbiG"/>
    <property type="match status" value="1"/>
</dbReference>
<dbReference type="PANTHER" id="PTHR43464">
    <property type="entry name" value="METHYLTRANSFERASE"/>
    <property type="match status" value="1"/>
</dbReference>
<dbReference type="PANTHER" id="PTHR43464:SF19">
    <property type="entry name" value="UBIQUINONE BIOSYNTHESIS O-METHYLTRANSFERASE, MITOCHONDRIAL"/>
    <property type="match status" value="1"/>
</dbReference>
<dbReference type="Pfam" id="PF13489">
    <property type="entry name" value="Methyltransf_23"/>
    <property type="match status" value="1"/>
</dbReference>
<dbReference type="SUPFAM" id="SSF53335">
    <property type="entry name" value="S-adenosyl-L-methionine-dependent methyltransferases"/>
    <property type="match status" value="1"/>
</dbReference>
<comment type="function">
    <text evidence="1">O-methyltransferase that catalyzes the 2 O-methylation steps in the ubiquinone biosynthetic pathway.</text>
</comment>
<comment type="catalytic activity">
    <reaction evidence="1">
        <text>a 3-demethylubiquinol + S-adenosyl-L-methionine = a ubiquinol + S-adenosyl-L-homocysteine + H(+)</text>
        <dbReference type="Rhea" id="RHEA:44380"/>
        <dbReference type="Rhea" id="RHEA-COMP:9566"/>
        <dbReference type="Rhea" id="RHEA-COMP:10914"/>
        <dbReference type="ChEBI" id="CHEBI:15378"/>
        <dbReference type="ChEBI" id="CHEBI:17976"/>
        <dbReference type="ChEBI" id="CHEBI:57856"/>
        <dbReference type="ChEBI" id="CHEBI:59789"/>
        <dbReference type="ChEBI" id="CHEBI:84422"/>
        <dbReference type="EC" id="2.1.1.64"/>
    </reaction>
</comment>
<comment type="catalytic activity">
    <reaction evidence="1">
        <text>a 3-(all-trans-polyprenyl)benzene-1,2-diol + S-adenosyl-L-methionine = a 2-methoxy-6-(all-trans-polyprenyl)phenol + S-adenosyl-L-homocysteine + H(+)</text>
        <dbReference type="Rhea" id="RHEA:31411"/>
        <dbReference type="Rhea" id="RHEA-COMP:9550"/>
        <dbReference type="Rhea" id="RHEA-COMP:9551"/>
        <dbReference type="ChEBI" id="CHEBI:15378"/>
        <dbReference type="ChEBI" id="CHEBI:57856"/>
        <dbReference type="ChEBI" id="CHEBI:59789"/>
        <dbReference type="ChEBI" id="CHEBI:62729"/>
        <dbReference type="ChEBI" id="CHEBI:62731"/>
        <dbReference type="EC" id="2.1.1.222"/>
    </reaction>
</comment>
<comment type="pathway">
    <text evidence="1">Cofactor biosynthesis; ubiquinone biosynthesis.</text>
</comment>
<comment type="similarity">
    <text evidence="1">Belongs to the methyltransferase superfamily. UbiG/COQ3 family.</text>
</comment>